<sequence length="158" mass="17271">MTETTEKVESIGPLDVKRVMAALPHRFPMLLVDRVETLIPGEKIVAIKAVTINEPFFTGHFPGNPIMPGVLIVEALAQAAGVLAIESLGLTGTGKLVYFMAINETKFRIPVEPGILLRLEVEFLQKRAKICKFKARALIEDKVAAETEFTAMIADPAN</sequence>
<organism>
    <name type="scientific">Zymomonas mobilis subsp. mobilis (strain ATCC 31821 / ZM4 / CP4)</name>
    <dbReference type="NCBI Taxonomy" id="264203"/>
    <lineage>
        <taxon>Bacteria</taxon>
        <taxon>Pseudomonadati</taxon>
        <taxon>Pseudomonadota</taxon>
        <taxon>Alphaproteobacteria</taxon>
        <taxon>Sphingomonadales</taxon>
        <taxon>Zymomonadaceae</taxon>
        <taxon>Zymomonas</taxon>
    </lineage>
</organism>
<protein>
    <recommendedName>
        <fullName evidence="1">3-hydroxyacyl-[acyl-carrier-protein] dehydratase FabZ</fullName>
        <ecNumber evidence="1">4.2.1.59</ecNumber>
    </recommendedName>
    <alternativeName>
        <fullName evidence="1">(3R)-hydroxymyristoyl-[acyl-carrier-protein] dehydratase</fullName>
        <shortName evidence="1">(3R)-hydroxymyristoyl-ACP dehydrase</shortName>
    </alternativeName>
    <alternativeName>
        <fullName evidence="1">Beta-hydroxyacyl-ACP dehydratase</fullName>
    </alternativeName>
</protein>
<reference key="1">
    <citation type="submission" date="1999-01" db="EMBL/GenBank/DDBJ databases">
        <authorList>
            <person name="Lee H.J."/>
            <person name="Kang H.S."/>
        </authorList>
    </citation>
    <scope>NUCLEOTIDE SEQUENCE [GENOMIC DNA]</scope>
    <source>
        <strain>ATCC 31821 / ZM4 / CP4</strain>
    </source>
</reference>
<reference key="2">
    <citation type="journal article" date="2005" name="Nat. Biotechnol.">
        <title>The genome sequence of the ethanologenic bacterium Zymomonas mobilis ZM4.</title>
        <authorList>
            <person name="Seo J.-S."/>
            <person name="Chong H."/>
            <person name="Park H.S."/>
            <person name="Yoon K.-O."/>
            <person name="Jung C."/>
            <person name="Kim J.J."/>
            <person name="Hong J.H."/>
            <person name="Kim H."/>
            <person name="Kim J.-H."/>
            <person name="Kil J.-I."/>
            <person name="Park C.J."/>
            <person name="Oh H.-M."/>
            <person name="Lee J.-S."/>
            <person name="Jin S.-J."/>
            <person name="Um H.-W."/>
            <person name="Lee H.-J."/>
            <person name="Oh S.-J."/>
            <person name="Kim J.Y."/>
            <person name="Kang H.L."/>
            <person name="Lee S.Y."/>
            <person name="Lee K.J."/>
            <person name="Kang H.S."/>
        </authorList>
    </citation>
    <scope>NUCLEOTIDE SEQUENCE [LARGE SCALE GENOMIC DNA]</scope>
    <source>
        <strain>ATCC 31821 / ZM4 / CP4</strain>
    </source>
</reference>
<keyword id="KW-0963">Cytoplasm</keyword>
<keyword id="KW-0441">Lipid A biosynthesis</keyword>
<keyword id="KW-0444">Lipid biosynthesis</keyword>
<keyword id="KW-0443">Lipid metabolism</keyword>
<keyword id="KW-0456">Lyase</keyword>
<keyword id="KW-1185">Reference proteome</keyword>
<name>FABZ_ZYMMO</name>
<accession>Q9X5F5</accession>
<accession>Q5NNE0</accession>
<proteinExistence type="inferred from homology"/>
<comment type="function">
    <text evidence="1">Involved in unsaturated fatty acids biosynthesis. Catalyzes the dehydration of short chain beta-hydroxyacyl-ACPs and long chain saturated and unsaturated beta-hydroxyacyl-ACPs.</text>
</comment>
<comment type="catalytic activity">
    <reaction evidence="1">
        <text>a (3R)-hydroxyacyl-[ACP] = a (2E)-enoyl-[ACP] + H2O</text>
        <dbReference type="Rhea" id="RHEA:13097"/>
        <dbReference type="Rhea" id="RHEA-COMP:9925"/>
        <dbReference type="Rhea" id="RHEA-COMP:9945"/>
        <dbReference type="ChEBI" id="CHEBI:15377"/>
        <dbReference type="ChEBI" id="CHEBI:78784"/>
        <dbReference type="ChEBI" id="CHEBI:78827"/>
        <dbReference type="EC" id="4.2.1.59"/>
    </reaction>
</comment>
<comment type="subcellular location">
    <subcellularLocation>
        <location evidence="1">Cytoplasm</location>
    </subcellularLocation>
</comment>
<comment type="similarity">
    <text evidence="1">Belongs to the thioester dehydratase family. FabZ subfamily.</text>
</comment>
<feature type="chain" id="PRO_0000091770" description="3-hydroxyacyl-[acyl-carrier-protein] dehydratase FabZ">
    <location>
        <begin position="1"/>
        <end position="158"/>
    </location>
</feature>
<feature type="active site" evidence="1">
    <location>
        <position position="60"/>
    </location>
</feature>
<dbReference type="EC" id="4.2.1.59" evidence="1"/>
<dbReference type="EMBL" id="AF124757">
    <property type="protein sequence ID" value="AAD29662.1"/>
    <property type="molecule type" value="Genomic_DNA"/>
</dbReference>
<dbReference type="EMBL" id="AE008692">
    <property type="protein sequence ID" value="AAV89770.1"/>
    <property type="molecule type" value="Genomic_DNA"/>
</dbReference>
<dbReference type="RefSeq" id="WP_011240973.1">
    <property type="nucleotide sequence ID" value="NZ_CP035711.1"/>
</dbReference>
<dbReference type="SMR" id="Q9X5F5"/>
<dbReference type="STRING" id="264203.ZMO1146"/>
<dbReference type="GeneID" id="79903729"/>
<dbReference type="KEGG" id="zmo:ZMO1146"/>
<dbReference type="eggNOG" id="COG0764">
    <property type="taxonomic scope" value="Bacteria"/>
</dbReference>
<dbReference type="HOGENOM" id="CLU_078912_1_0_5"/>
<dbReference type="Proteomes" id="UP000001173">
    <property type="component" value="Chromosome"/>
</dbReference>
<dbReference type="GO" id="GO:0005737">
    <property type="term" value="C:cytoplasm"/>
    <property type="evidence" value="ECO:0007669"/>
    <property type="project" value="UniProtKB-SubCell"/>
</dbReference>
<dbReference type="GO" id="GO:0016020">
    <property type="term" value="C:membrane"/>
    <property type="evidence" value="ECO:0007669"/>
    <property type="project" value="GOC"/>
</dbReference>
<dbReference type="GO" id="GO:0019171">
    <property type="term" value="F:(3R)-hydroxyacyl-[acyl-carrier-protein] dehydratase activity"/>
    <property type="evidence" value="ECO:0007669"/>
    <property type="project" value="UniProtKB-EC"/>
</dbReference>
<dbReference type="GO" id="GO:0006633">
    <property type="term" value="P:fatty acid biosynthetic process"/>
    <property type="evidence" value="ECO:0007669"/>
    <property type="project" value="UniProtKB-UniRule"/>
</dbReference>
<dbReference type="GO" id="GO:0009245">
    <property type="term" value="P:lipid A biosynthetic process"/>
    <property type="evidence" value="ECO:0007669"/>
    <property type="project" value="UniProtKB-UniRule"/>
</dbReference>
<dbReference type="CDD" id="cd01288">
    <property type="entry name" value="FabZ"/>
    <property type="match status" value="1"/>
</dbReference>
<dbReference type="FunFam" id="3.10.129.10:FF:000001">
    <property type="entry name" value="3-hydroxyacyl-[acyl-carrier-protein] dehydratase FabZ"/>
    <property type="match status" value="1"/>
</dbReference>
<dbReference type="Gene3D" id="3.10.129.10">
    <property type="entry name" value="Hotdog Thioesterase"/>
    <property type="match status" value="1"/>
</dbReference>
<dbReference type="HAMAP" id="MF_00406">
    <property type="entry name" value="FabZ"/>
    <property type="match status" value="1"/>
</dbReference>
<dbReference type="InterPro" id="IPR013114">
    <property type="entry name" value="FabA_FabZ"/>
</dbReference>
<dbReference type="InterPro" id="IPR010084">
    <property type="entry name" value="FabZ"/>
</dbReference>
<dbReference type="InterPro" id="IPR029069">
    <property type="entry name" value="HotDog_dom_sf"/>
</dbReference>
<dbReference type="NCBIfam" id="TIGR01750">
    <property type="entry name" value="fabZ"/>
    <property type="match status" value="1"/>
</dbReference>
<dbReference type="NCBIfam" id="NF000582">
    <property type="entry name" value="PRK00006.1"/>
    <property type="match status" value="1"/>
</dbReference>
<dbReference type="PANTHER" id="PTHR30272">
    <property type="entry name" value="3-HYDROXYACYL-[ACYL-CARRIER-PROTEIN] DEHYDRATASE"/>
    <property type="match status" value="1"/>
</dbReference>
<dbReference type="PANTHER" id="PTHR30272:SF1">
    <property type="entry name" value="3-HYDROXYACYL-[ACYL-CARRIER-PROTEIN] DEHYDRATASE"/>
    <property type="match status" value="1"/>
</dbReference>
<dbReference type="Pfam" id="PF07977">
    <property type="entry name" value="FabA"/>
    <property type="match status" value="1"/>
</dbReference>
<dbReference type="SUPFAM" id="SSF54637">
    <property type="entry name" value="Thioesterase/thiol ester dehydrase-isomerase"/>
    <property type="match status" value="1"/>
</dbReference>
<evidence type="ECO:0000255" key="1">
    <source>
        <dbReference type="HAMAP-Rule" id="MF_00406"/>
    </source>
</evidence>
<gene>
    <name evidence="1" type="primary">fabZ</name>
    <name type="synonym">mad</name>
    <name type="ordered locus">ZMO1146</name>
</gene>